<organism>
    <name type="scientific">Enterobacter sp. (strain 638)</name>
    <dbReference type="NCBI Taxonomy" id="399742"/>
    <lineage>
        <taxon>Bacteria</taxon>
        <taxon>Pseudomonadati</taxon>
        <taxon>Pseudomonadota</taxon>
        <taxon>Gammaproteobacteria</taxon>
        <taxon>Enterobacterales</taxon>
        <taxon>Enterobacteriaceae</taxon>
        <taxon>Enterobacter</taxon>
    </lineage>
</organism>
<evidence type="ECO:0000255" key="1">
    <source>
        <dbReference type="HAMAP-Rule" id="MF_00605"/>
    </source>
</evidence>
<dbReference type="EC" id="2.1.1.228" evidence="1"/>
<dbReference type="EMBL" id="CP000653">
    <property type="protein sequence ID" value="ABP61752.1"/>
    <property type="molecule type" value="Genomic_DNA"/>
</dbReference>
<dbReference type="RefSeq" id="WP_015960082.1">
    <property type="nucleotide sequence ID" value="NC_009436.1"/>
</dbReference>
<dbReference type="SMR" id="A4WDH2"/>
<dbReference type="STRING" id="399742.Ent638_3088"/>
<dbReference type="GeneID" id="93306035"/>
<dbReference type="KEGG" id="ent:Ent638_3088"/>
<dbReference type="eggNOG" id="COG0336">
    <property type="taxonomic scope" value="Bacteria"/>
</dbReference>
<dbReference type="HOGENOM" id="CLU_047363_0_1_6"/>
<dbReference type="OrthoDB" id="9807416at2"/>
<dbReference type="Proteomes" id="UP000000230">
    <property type="component" value="Chromosome"/>
</dbReference>
<dbReference type="GO" id="GO:0005829">
    <property type="term" value="C:cytosol"/>
    <property type="evidence" value="ECO:0007669"/>
    <property type="project" value="TreeGrafter"/>
</dbReference>
<dbReference type="GO" id="GO:0052906">
    <property type="term" value="F:tRNA (guanine(37)-N1)-methyltransferase activity"/>
    <property type="evidence" value="ECO:0007669"/>
    <property type="project" value="UniProtKB-UniRule"/>
</dbReference>
<dbReference type="GO" id="GO:0002939">
    <property type="term" value="P:tRNA N1-guanine methylation"/>
    <property type="evidence" value="ECO:0007669"/>
    <property type="project" value="TreeGrafter"/>
</dbReference>
<dbReference type="CDD" id="cd18080">
    <property type="entry name" value="TrmD-like"/>
    <property type="match status" value="1"/>
</dbReference>
<dbReference type="FunFam" id="1.10.1270.20:FF:000001">
    <property type="entry name" value="tRNA (guanine-N(1)-)-methyltransferase"/>
    <property type="match status" value="1"/>
</dbReference>
<dbReference type="FunFam" id="3.40.1280.10:FF:000001">
    <property type="entry name" value="tRNA (guanine-N(1)-)-methyltransferase"/>
    <property type="match status" value="1"/>
</dbReference>
<dbReference type="Gene3D" id="3.40.1280.10">
    <property type="match status" value="1"/>
</dbReference>
<dbReference type="Gene3D" id="1.10.1270.20">
    <property type="entry name" value="tRNA(m1g37)methyltransferase, domain 2"/>
    <property type="match status" value="1"/>
</dbReference>
<dbReference type="HAMAP" id="MF_00605">
    <property type="entry name" value="TrmD"/>
    <property type="match status" value="1"/>
</dbReference>
<dbReference type="InterPro" id="IPR029028">
    <property type="entry name" value="Alpha/beta_knot_MTases"/>
</dbReference>
<dbReference type="InterPro" id="IPR023148">
    <property type="entry name" value="tRNA_m1G_MeTrfase_C_sf"/>
</dbReference>
<dbReference type="InterPro" id="IPR002649">
    <property type="entry name" value="tRNA_m1G_MeTrfase_TrmD"/>
</dbReference>
<dbReference type="InterPro" id="IPR029026">
    <property type="entry name" value="tRNA_m1G_MTases_N"/>
</dbReference>
<dbReference type="InterPro" id="IPR016009">
    <property type="entry name" value="tRNA_MeTrfase_TRMD/TRM10"/>
</dbReference>
<dbReference type="NCBIfam" id="NF000648">
    <property type="entry name" value="PRK00026.1"/>
    <property type="match status" value="1"/>
</dbReference>
<dbReference type="NCBIfam" id="TIGR00088">
    <property type="entry name" value="trmD"/>
    <property type="match status" value="1"/>
</dbReference>
<dbReference type="PANTHER" id="PTHR46417">
    <property type="entry name" value="TRNA (GUANINE-N(1)-)-METHYLTRANSFERASE"/>
    <property type="match status" value="1"/>
</dbReference>
<dbReference type="PANTHER" id="PTHR46417:SF1">
    <property type="entry name" value="TRNA (GUANINE-N(1)-)-METHYLTRANSFERASE"/>
    <property type="match status" value="1"/>
</dbReference>
<dbReference type="Pfam" id="PF01746">
    <property type="entry name" value="tRNA_m1G_MT"/>
    <property type="match status" value="1"/>
</dbReference>
<dbReference type="PIRSF" id="PIRSF000386">
    <property type="entry name" value="tRNA_mtase"/>
    <property type="match status" value="1"/>
</dbReference>
<dbReference type="SUPFAM" id="SSF75217">
    <property type="entry name" value="alpha/beta knot"/>
    <property type="match status" value="1"/>
</dbReference>
<proteinExistence type="inferred from homology"/>
<name>TRMD_ENT38</name>
<gene>
    <name evidence="1" type="primary">trmD</name>
    <name type="ordered locus">Ent638_3088</name>
</gene>
<accession>A4WDH2</accession>
<feature type="chain" id="PRO_1000061271" description="tRNA (guanine-N(1)-)-methyltransferase">
    <location>
        <begin position="1"/>
        <end position="255"/>
    </location>
</feature>
<feature type="binding site" evidence="1">
    <location>
        <position position="113"/>
    </location>
    <ligand>
        <name>S-adenosyl-L-methionine</name>
        <dbReference type="ChEBI" id="CHEBI:59789"/>
    </ligand>
</feature>
<feature type="binding site" evidence="1">
    <location>
        <begin position="133"/>
        <end position="138"/>
    </location>
    <ligand>
        <name>S-adenosyl-L-methionine</name>
        <dbReference type="ChEBI" id="CHEBI:59789"/>
    </ligand>
</feature>
<keyword id="KW-0963">Cytoplasm</keyword>
<keyword id="KW-0489">Methyltransferase</keyword>
<keyword id="KW-0949">S-adenosyl-L-methionine</keyword>
<keyword id="KW-0808">Transferase</keyword>
<keyword id="KW-0819">tRNA processing</keyword>
<sequence>MWIGIISLFPEMFRAITDYGVTGRAVKKGLLNIQSWSPRDFAHDRHRTVDERPYGGGPGMLMMVQPLRDAIHTAKAAAGEGAKVIYLSPQGRKLDQAGVSELATNQKLILVCGRYEGIDERVIQTEIDEEWSIGDYVLSGGELPAMTLIDSVARFIPGVLGHEASATEDSFADGLLDCPHYTRPEVLEGMEVPAVLLSGNHAEIRRWRLKQSLGRTWLRRPELLENLALTEEQAKLLAEFKKEHAHQQHKHDGMA</sequence>
<protein>
    <recommendedName>
        <fullName evidence="1">tRNA (guanine-N(1)-)-methyltransferase</fullName>
        <ecNumber evidence="1">2.1.1.228</ecNumber>
    </recommendedName>
    <alternativeName>
        <fullName evidence="1">M1G-methyltransferase</fullName>
    </alternativeName>
    <alternativeName>
        <fullName evidence="1">tRNA [GM37] methyltransferase</fullName>
    </alternativeName>
</protein>
<reference key="1">
    <citation type="journal article" date="2010" name="PLoS Genet.">
        <title>Genome sequence of the plant growth promoting endophytic bacterium Enterobacter sp. 638.</title>
        <authorList>
            <person name="Taghavi S."/>
            <person name="van der Lelie D."/>
            <person name="Hoffman A."/>
            <person name="Zhang Y.B."/>
            <person name="Walla M.D."/>
            <person name="Vangronsveld J."/>
            <person name="Newman L."/>
            <person name="Monchy S."/>
        </authorList>
    </citation>
    <scope>NUCLEOTIDE SEQUENCE [LARGE SCALE GENOMIC DNA]</scope>
    <source>
        <strain>638</strain>
    </source>
</reference>
<comment type="function">
    <text evidence="1">Specifically methylates guanosine-37 in various tRNAs.</text>
</comment>
<comment type="catalytic activity">
    <reaction evidence="1">
        <text>guanosine(37) in tRNA + S-adenosyl-L-methionine = N(1)-methylguanosine(37) in tRNA + S-adenosyl-L-homocysteine + H(+)</text>
        <dbReference type="Rhea" id="RHEA:36899"/>
        <dbReference type="Rhea" id="RHEA-COMP:10145"/>
        <dbReference type="Rhea" id="RHEA-COMP:10147"/>
        <dbReference type="ChEBI" id="CHEBI:15378"/>
        <dbReference type="ChEBI" id="CHEBI:57856"/>
        <dbReference type="ChEBI" id="CHEBI:59789"/>
        <dbReference type="ChEBI" id="CHEBI:73542"/>
        <dbReference type="ChEBI" id="CHEBI:74269"/>
        <dbReference type="EC" id="2.1.1.228"/>
    </reaction>
</comment>
<comment type="subunit">
    <text evidence="1">Homodimer.</text>
</comment>
<comment type="subcellular location">
    <subcellularLocation>
        <location evidence="1">Cytoplasm</location>
    </subcellularLocation>
</comment>
<comment type="similarity">
    <text evidence="1">Belongs to the RNA methyltransferase TrmD family.</text>
</comment>